<dbReference type="EMBL" id="AE017355">
    <property type="protein sequence ID" value="AAT63870.1"/>
    <property type="molecule type" value="Genomic_DNA"/>
</dbReference>
<dbReference type="RefSeq" id="WP_000558200.1">
    <property type="nucleotide sequence ID" value="NC_005957.1"/>
</dbReference>
<dbReference type="RefSeq" id="YP_034473.1">
    <property type="nucleotide sequence ID" value="NC_005957.1"/>
</dbReference>
<dbReference type="SMR" id="Q6HPP7"/>
<dbReference type="GeneID" id="93010932"/>
<dbReference type="KEGG" id="btk:BT9727_0117"/>
<dbReference type="PATRIC" id="fig|281309.8.peg.118"/>
<dbReference type="HOGENOM" id="CLU_093315_2_0_9"/>
<dbReference type="PRO" id="PR:Q6HPP7"/>
<dbReference type="Proteomes" id="UP000001301">
    <property type="component" value="Chromosome"/>
</dbReference>
<dbReference type="GO" id="GO:1990904">
    <property type="term" value="C:ribonucleoprotein complex"/>
    <property type="evidence" value="ECO:0007669"/>
    <property type="project" value="UniProtKB-KW"/>
</dbReference>
<dbReference type="GO" id="GO:0005840">
    <property type="term" value="C:ribosome"/>
    <property type="evidence" value="ECO:0007669"/>
    <property type="project" value="UniProtKB-KW"/>
</dbReference>
<dbReference type="GO" id="GO:0019843">
    <property type="term" value="F:rRNA binding"/>
    <property type="evidence" value="ECO:0007669"/>
    <property type="project" value="UniProtKB-UniRule"/>
</dbReference>
<dbReference type="GO" id="GO:0003735">
    <property type="term" value="F:structural constituent of ribosome"/>
    <property type="evidence" value="ECO:0007669"/>
    <property type="project" value="InterPro"/>
</dbReference>
<dbReference type="GO" id="GO:0006412">
    <property type="term" value="P:translation"/>
    <property type="evidence" value="ECO:0007669"/>
    <property type="project" value="UniProtKB-UniRule"/>
</dbReference>
<dbReference type="CDD" id="cd06089">
    <property type="entry name" value="KOW_RPL26"/>
    <property type="match status" value="1"/>
</dbReference>
<dbReference type="FunFam" id="2.30.30.30:FF:000004">
    <property type="entry name" value="50S ribosomal protein L24"/>
    <property type="match status" value="1"/>
</dbReference>
<dbReference type="Gene3D" id="2.30.30.30">
    <property type="match status" value="1"/>
</dbReference>
<dbReference type="HAMAP" id="MF_01326_B">
    <property type="entry name" value="Ribosomal_uL24_B"/>
    <property type="match status" value="1"/>
</dbReference>
<dbReference type="InterPro" id="IPR005824">
    <property type="entry name" value="KOW"/>
</dbReference>
<dbReference type="InterPro" id="IPR014722">
    <property type="entry name" value="Rib_uL2_dom2"/>
</dbReference>
<dbReference type="InterPro" id="IPR003256">
    <property type="entry name" value="Ribosomal_uL24"/>
</dbReference>
<dbReference type="InterPro" id="IPR005825">
    <property type="entry name" value="Ribosomal_uL24_CS"/>
</dbReference>
<dbReference type="InterPro" id="IPR041988">
    <property type="entry name" value="Ribosomal_uL24_KOW"/>
</dbReference>
<dbReference type="InterPro" id="IPR008991">
    <property type="entry name" value="Translation_prot_SH3-like_sf"/>
</dbReference>
<dbReference type="NCBIfam" id="TIGR01079">
    <property type="entry name" value="rplX_bact"/>
    <property type="match status" value="1"/>
</dbReference>
<dbReference type="PANTHER" id="PTHR12903">
    <property type="entry name" value="MITOCHONDRIAL RIBOSOMAL PROTEIN L24"/>
    <property type="match status" value="1"/>
</dbReference>
<dbReference type="Pfam" id="PF00467">
    <property type="entry name" value="KOW"/>
    <property type="match status" value="1"/>
</dbReference>
<dbReference type="Pfam" id="PF17136">
    <property type="entry name" value="ribosomal_L24"/>
    <property type="match status" value="1"/>
</dbReference>
<dbReference type="SMART" id="SM00739">
    <property type="entry name" value="KOW"/>
    <property type="match status" value="1"/>
</dbReference>
<dbReference type="SUPFAM" id="SSF50104">
    <property type="entry name" value="Translation proteins SH3-like domain"/>
    <property type="match status" value="1"/>
</dbReference>
<dbReference type="PROSITE" id="PS01108">
    <property type="entry name" value="RIBOSOMAL_L24"/>
    <property type="match status" value="1"/>
</dbReference>
<reference key="1">
    <citation type="journal article" date="2006" name="J. Bacteriol.">
        <title>Pathogenomic sequence analysis of Bacillus cereus and Bacillus thuringiensis isolates closely related to Bacillus anthracis.</title>
        <authorList>
            <person name="Han C.S."/>
            <person name="Xie G."/>
            <person name="Challacombe J.F."/>
            <person name="Altherr M.R."/>
            <person name="Bhotika S.S."/>
            <person name="Bruce D."/>
            <person name="Campbell C.S."/>
            <person name="Campbell M.L."/>
            <person name="Chen J."/>
            <person name="Chertkov O."/>
            <person name="Cleland C."/>
            <person name="Dimitrijevic M."/>
            <person name="Doggett N.A."/>
            <person name="Fawcett J.J."/>
            <person name="Glavina T."/>
            <person name="Goodwin L.A."/>
            <person name="Hill K.K."/>
            <person name="Hitchcock P."/>
            <person name="Jackson P.J."/>
            <person name="Keim P."/>
            <person name="Kewalramani A.R."/>
            <person name="Longmire J."/>
            <person name="Lucas S."/>
            <person name="Malfatti S."/>
            <person name="McMurry K."/>
            <person name="Meincke L.J."/>
            <person name="Misra M."/>
            <person name="Moseman B.L."/>
            <person name="Mundt M."/>
            <person name="Munk A.C."/>
            <person name="Okinaka R.T."/>
            <person name="Parson-Quintana B."/>
            <person name="Reilly L.P."/>
            <person name="Richardson P."/>
            <person name="Robinson D.L."/>
            <person name="Rubin E."/>
            <person name="Saunders E."/>
            <person name="Tapia R."/>
            <person name="Tesmer J.G."/>
            <person name="Thayer N."/>
            <person name="Thompson L.S."/>
            <person name="Tice H."/>
            <person name="Ticknor L.O."/>
            <person name="Wills P.L."/>
            <person name="Brettin T.S."/>
            <person name="Gilna P."/>
        </authorList>
    </citation>
    <scope>NUCLEOTIDE SEQUENCE [LARGE SCALE GENOMIC DNA]</scope>
    <source>
        <strain>97-27</strain>
    </source>
</reference>
<feature type="chain" id="PRO_0000241566" description="Large ribosomal subunit protein uL24">
    <location>
        <begin position="1"/>
        <end position="103"/>
    </location>
</feature>
<keyword id="KW-0687">Ribonucleoprotein</keyword>
<keyword id="KW-0689">Ribosomal protein</keyword>
<keyword id="KW-0694">RNA-binding</keyword>
<keyword id="KW-0699">rRNA-binding</keyword>
<name>RL24_BACHK</name>
<sequence length="103" mass="11228">MHVKKGDKVQVITGKDKGKQGVILVAFPKQNRVIVEGVNIVKKHSKPSQLNPQGGIITKEAPIHVSNVMILDPKTGEPTRVGFKVEDGKKVRIAKKSGELLDK</sequence>
<accession>Q6HPP7</accession>
<proteinExistence type="inferred from homology"/>
<protein>
    <recommendedName>
        <fullName evidence="1">Large ribosomal subunit protein uL24</fullName>
    </recommendedName>
    <alternativeName>
        <fullName evidence="2">50S ribosomal protein L24</fullName>
    </alternativeName>
</protein>
<comment type="function">
    <text evidence="1">One of two assembly initiator proteins, it binds directly to the 5'-end of the 23S rRNA, where it nucleates assembly of the 50S subunit.</text>
</comment>
<comment type="function">
    <text evidence="1">One of the proteins that surrounds the polypeptide exit tunnel on the outside of the subunit.</text>
</comment>
<comment type="subunit">
    <text evidence="1">Part of the 50S ribosomal subunit.</text>
</comment>
<comment type="similarity">
    <text evidence="1">Belongs to the universal ribosomal protein uL24 family.</text>
</comment>
<evidence type="ECO:0000255" key="1">
    <source>
        <dbReference type="HAMAP-Rule" id="MF_01326"/>
    </source>
</evidence>
<evidence type="ECO:0000305" key="2"/>
<gene>
    <name evidence="1" type="primary">rplX</name>
    <name type="ordered locus">BT9727_0117</name>
</gene>
<organism>
    <name type="scientific">Bacillus thuringiensis subsp. konkukian (strain 97-27)</name>
    <dbReference type="NCBI Taxonomy" id="281309"/>
    <lineage>
        <taxon>Bacteria</taxon>
        <taxon>Bacillati</taxon>
        <taxon>Bacillota</taxon>
        <taxon>Bacilli</taxon>
        <taxon>Bacillales</taxon>
        <taxon>Bacillaceae</taxon>
        <taxon>Bacillus</taxon>
        <taxon>Bacillus cereus group</taxon>
    </lineage>
</organism>